<feature type="chain" id="PRO_0000352023" description="Small ribosomal subunit protein uS2">
    <location>
        <begin position="1"/>
        <end position="230"/>
    </location>
</feature>
<accession>A2C1I7</accession>
<keyword id="KW-0687">Ribonucleoprotein</keyword>
<keyword id="KW-0689">Ribosomal protein</keyword>
<comment type="similarity">
    <text evidence="1">Belongs to the universal ribosomal protein uS2 family.</text>
</comment>
<comment type="sequence caution" evidence="2">
    <conflict type="erroneous initiation">
        <sequence resource="EMBL-CDS" id="ABM75347"/>
    </conflict>
</comment>
<organism>
    <name type="scientific">Prochlorococcus marinus (strain NATL1A)</name>
    <dbReference type="NCBI Taxonomy" id="167555"/>
    <lineage>
        <taxon>Bacteria</taxon>
        <taxon>Bacillati</taxon>
        <taxon>Cyanobacteriota</taxon>
        <taxon>Cyanophyceae</taxon>
        <taxon>Synechococcales</taxon>
        <taxon>Prochlorococcaceae</taxon>
        <taxon>Prochlorococcus</taxon>
    </lineage>
</organism>
<evidence type="ECO:0000255" key="1">
    <source>
        <dbReference type="HAMAP-Rule" id="MF_00291"/>
    </source>
</evidence>
<evidence type="ECO:0000305" key="2"/>
<gene>
    <name evidence="1" type="primary">rpsB</name>
    <name evidence="1" type="synonym">rps2</name>
    <name type="ordered locus">NATL1_07891</name>
</gene>
<protein>
    <recommendedName>
        <fullName evidence="1">Small ribosomal subunit protein uS2</fullName>
    </recommendedName>
    <alternativeName>
        <fullName evidence="2">30S ribosomal protein S2</fullName>
    </alternativeName>
</protein>
<sequence>MAVVSLSEMMEAGAHFGHQTRRWNPKMSRYIYSARNGVHIIDLVKTAVCMNSAYKWTRGAARSGKRFLFVGTKKQASEVVAQEAIRCGASYVNQRWLGGMLTNWTTMKARIDRLKDLERMESSGAIAMRPKKEGAVLRRELERLQKYLGGLKGMRRLPDVVVLVDQRRETNAVLEARKLDIPLVSMLDTNCDPDLCEIPIPCNDDAVRSVQLVLGRLADAINEGRHGPNE</sequence>
<name>RS2_PROM1</name>
<reference key="1">
    <citation type="journal article" date="2007" name="PLoS Genet.">
        <title>Patterns and implications of gene gain and loss in the evolution of Prochlorococcus.</title>
        <authorList>
            <person name="Kettler G.C."/>
            <person name="Martiny A.C."/>
            <person name="Huang K."/>
            <person name="Zucker J."/>
            <person name="Coleman M.L."/>
            <person name="Rodrigue S."/>
            <person name="Chen F."/>
            <person name="Lapidus A."/>
            <person name="Ferriera S."/>
            <person name="Johnson J."/>
            <person name="Steglich C."/>
            <person name="Church G.M."/>
            <person name="Richardson P."/>
            <person name="Chisholm S.W."/>
        </authorList>
    </citation>
    <scope>NUCLEOTIDE SEQUENCE [LARGE SCALE GENOMIC DNA]</scope>
    <source>
        <strain>NATL1A</strain>
    </source>
</reference>
<dbReference type="EMBL" id="CP000553">
    <property type="protein sequence ID" value="ABM75347.1"/>
    <property type="status" value="ALT_INIT"/>
    <property type="molecule type" value="Genomic_DNA"/>
</dbReference>
<dbReference type="RefSeq" id="WP_011293691.1">
    <property type="nucleotide sequence ID" value="NC_008819.1"/>
</dbReference>
<dbReference type="SMR" id="A2C1I7"/>
<dbReference type="KEGG" id="pme:NATL1_07891"/>
<dbReference type="eggNOG" id="COG0052">
    <property type="taxonomic scope" value="Bacteria"/>
</dbReference>
<dbReference type="HOGENOM" id="CLU_040318_1_2_3"/>
<dbReference type="Proteomes" id="UP000002592">
    <property type="component" value="Chromosome"/>
</dbReference>
<dbReference type="GO" id="GO:0022627">
    <property type="term" value="C:cytosolic small ribosomal subunit"/>
    <property type="evidence" value="ECO:0007669"/>
    <property type="project" value="TreeGrafter"/>
</dbReference>
<dbReference type="GO" id="GO:0003735">
    <property type="term" value="F:structural constituent of ribosome"/>
    <property type="evidence" value="ECO:0007669"/>
    <property type="project" value="InterPro"/>
</dbReference>
<dbReference type="GO" id="GO:0006412">
    <property type="term" value="P:translation"/>
    <property type="evidence" value="ECO:0007669"/>
    <property type="project" value="UniProtKB-UniRule"/>
</dbReference>
<dbReference type="CDD" id="cd01425">
    <property type="entry name" value="RPS2"/>
    <property type="match status" value="1"/>
</dbReference>
<dbReference type="FunFam" id="1.10.287.610:FF:000001">
    <property type="entry name" value="30S ribosomal protein S2"/>
    <property type="match status" value="1"/>
</dbReference>
<dbReference type="Gene3D" id="3.40.50.10490">
    <property type="entry name" value="Glucose-6-phosphate isomerase like protein, domain 1"/>
    <property type="match status" value="1"/>
</dbReference>
<dbReference type="Gene3D" id="1.10.287.610">
    <property type="entry name" value="Helix hairpin bin"/>
    <property type="match status" value="1"/>
</dbReference>
<dbReference type="HAMAP" id="MF_00291_B">
    <property type="entry name" value="Ribosomal_uS2_B"/>
    <property type="match status" value="1"/>
</dbReference>
<dbReference type="InterPro" id="IPR001865">
    <property type="entry name" value="Ribosomal_uS2"/>
</dbReference>
<dbReference type="InterPro" id="IPR005706">
    <property type="entry name" value="Ribosomal_uS2_bac/mit/plastid"/>
</dbReference>
<dbReference type="InterPro" id="IPR018130">
    <property type="entry name" value="Ribosomal_uS2_CS"/>
</dbReference>
<dbReference type="InterPro" id="IPR023591">
    <property type="entry name" value="Ribosomal_uS2_flav_dom_sf"/>
</dbReference>
<dbReference type="NCBIfam" id="TIGR01011">
    <property type="entry name" value="rpsB_bact"/>
    <property type="match status" value="1"/>
</dbReference>
<dbReference type="PANTHER" id="PTHR12534">
    <property type="entry name" value="30S RIBOSOMAL PROTEIN S2 PROKARYOTIC AND ORGANELLAR"/>
    <property type="match status" value="1"/>
</dbReference>
<dbReference type="PANTHER" id="PTHR12534:SF0">
    <property type="entry name" value="SMALL RIBOSOMAL SUBUNIT PROTEIN US2M"/>
    <property type="match status" value="1"/>
</dbReference>
<dbReference type="Pfam" id="PF00318">
    <property type="entry name" value="Ribosomal_S2"/>
    <property type="match status" value="1"/>
</dbReference>
<dbReference type="PRINTS" id="PR00395">
    <property type="entry name" value="RIBOSOMALS2"/>
</dbReference>
<dbReference type="SUPFAM" id="SSF52313">
    <property type="entry name" value="Ribosomal protein S2"/>
    <property type="match status" value="1"/>
</dbReference>
<dbReference type="PROSITE" id="PS00962">
    <property type="entry name" value="RIBOSOMAL_S2_1"/>
    <property type="match status" value="1"/>
</dbReference>
<proteinExistence type="inferred from homology"/>